<protein>
    <recommendedName>
        <fullName>Gamma-tubulin complex component 4 homolog</fullName>
    </recommendedName>
</protein>
<comment type="function">
    <text evidence="1">Gamma-tubulin complex is necessary for microtubule nucleation at the microtubule organizing centers (MTOCs).</text>
</comment>
<comment type="subcellular location">
    <subcellularLocation>
        <location evidence="2">Cytoplasm</location>
        <location evidence="2">Cytoskeleton</location>
        <location evidence="2">Microtubule organizing center</location>
    </subcellularLocation>
</comment>
<comment type="similarity">
    <text evidence="3">Belongs to the TUBGCP family.</text>
</comment>
<reference key="1">
    <citation type="journal article" date="1999" name="J. Cell Biol.">
        <title>Human 76p: a new protein member of the gamma-tubulin associated protein family.</title>
        <authorList>
            <person name="Fava F."/>
            <person name="Raynaud-Messina B."/>
            <person name="Leung-Tack J."/>
            <person name="Mazzolini L."/>
            <person name="Li M."/>
            <person name="Guillemot J.-C."/>
            <person name="Cachot D."/>
            <person name="Tollon Y."/>
            <person name="Ferrara P."/>
            <person name="Wright M."/>
        </authorList>
    </citation>
    <scope>NUCLEOTIDE SEQUENCE [MRNA]</scope>
</reference>
<evidence type="ECO:0000250" key="1"/>
<evidence type="ECO:0000250" key="2">
    <source>
        <dbReference type="UniProtKB" id="Q9BSJ2"/>
    </source>
</evidence>
<evidence type="ECO:0000305" key="3"/>
<feature type="chain" id="PRO_0000078128" description="Gamma-tubulin complex component 4 homolog">
    <location>
        <begin position="1"/>
        <end position="739"/>
    </location>
</feature>
<gene>
    <name type="primary">85P</name>
</gene>
<name>GCP4_MEDTR</name>
<keyword id="KW-0963">Cytoplasm</keyword>
<keyword id="KW-0206">Cytoskeleton</keyword>
<keyword id="KW-0493">Microtubule</keyword>
<sequence length="739" mass="85275">MLHELLLALLGYTGDLIIDRRDNNLSANTPISDECTFKLAPDISFIDPSDRELIERIITLGFYYRELERFSAKSRNLNWIRSENANPLENKEKPSVYRRALANGIVEILAVYSSSILHIEQLLLSETMPILATVTQGLNKFFSLLPPLYELILKIERGDIRGGELLNLLHKKCHCGVPELQTCIQRLLWHGHQVMYNQLASWMVYGILEDRHGEFFISRQEGRDVENSSSHQEISEKLSRLSTADASLSDWHMGFHISLDMLPEYIPMRVAESILFAGKAVRVLRNPSPSFLSQDDVYPQEPKRFPKIHGFEGRFNFQREPIINTGMRVEDLLPQSEADKIENMLLDLKESSEFHKRSFECAVDSIQAIAASHLWQLVVVRADLNGHLKALKDYFLLAKGDFFQCFLEESRQLMRLPPRQSTAEADLMVPFQLASLKTIGEEDKYFSKVSLRMPSYGITVKPSLLNVPKATSAAADGISGASISNASSEMSVDGWDGIALEYSIEWPLHLFFTQEVLSRYLKVFQYLLRLKRTQMELEKLWASVMHQYHSIFAKNKKSDQDKSPITQQRDQRFRSMWRVREHMAFLIRNLQFYIQVDVIESQWNILQSHIQDSHDFTELVGFHQEYLSALISQTFLDIGSVSRILDGIMKLCLQFCWNIENQDNFSNTSELEHIAEEFNKKSNSLYTILRSSRLAGSQRTPFLRRFLLRLNLNSFFESTAKEVMNVVRPRPTFPGLNQR</sequence>
<proteinExistence type="evidence at transcript level"/>
<dbReference type="EMBL" id="AJ249679">
    <property type="protein sequence ID" value="CAB62542.1"/>
    <property type="molecule type" value="mRNA"/>
</dbReference>
<dbReference type="SMR" id="Q9SC88"/>
<dbReference type="PaxDb" id="3880-AES61764"/>
<dbReference type="EnsemblPlants" id="rna5103">
    <property type="protein sequence ID" value="RHN81105.1"/>
    <property type="gene ID" value="gene5103"/>
</dbReference>
<dbReference type="GeneID" id="11416818"/>
<dbReference type="Gramene" id="rna5103">
    <property type="protein sequence ID" value="RHN81105.1"/>
    <property type="gene ID" value="gene5103"/>
</dbReference>
<dbReference type="KEGG" id="mtr:11416818"/>
<dbReference type="eggNOG" id="KOG2065">
    <property type="taxonomic scope" value="Eukaryota"/>
</dbReference>
<dbReference type="HOGENOM" id="CLU_012029_0_0_1"/>
<dbReference type="OrthoDB" id="78652at2759"/>
<dbReference type="GO" id="GO:0005737">
    <property type="term" value="C:cytoplasm"/>
    <property type="evidence" value="ECO:0007669"/>
    <property type="project" value="UniProtKB-KW"/>
</dbReference>
<dbReference type="GO" id="GO:0005874">
    <property type="term" value="C:microtubule"/>
    <property type="evidence" value="ECO:0007669"/>
    <property type="project" value="UniProtKB-KW"/>
</dbReference>
<dbReference type="GO" id="GO:0005815">
    <property type="term" value="C:microtubule organizing center"/>
    <property type="evidence" value="ECO:0007669"/>
    <property type="project" value="UniProtKB-SubCell"/>
</dbReference>
<dbReference type="GO" id="GO:0000922">
    <property type="term" value="C:spindle pole"/>
    <property type="evidence" value="ECO:0007669"/>
    <property type="project" value="InterPro"/>
</dbReference>
<dbReference type="GO" id="GO:0043015">
    <property type="term" value="F:gamma-tubulin binding"/>
    <property type="evidence" value="ECO:0007669"/>
    <property type="project" value="InterPro"/>
</dbReference>
<dbReference type="GO" id="GO:0007020">
    <property type="term" value="P:microtubule nucleation"/>
    <property type="evidence" value="ECO:0007669"/>
    <property type="project" value="InterPro"/>
</dbReference>
<dbReference type="FunFam" id="1.20.120.1900:FF:000010">
    <property type="entry name" value="Gamma-tubulin complex component"/>
    <property type="match status" value="1"/>
</dbReference>
<dbReference type="Gene3D" id="1.20.120.1900">
    <property type="entry name" value="Gamma-tubulin complex, C-terminal domain"/>
    <property type="match status" value="1"/>
</dbReference>
<dbReference type="InterPro" id="IPR007259">
    <property type="entry name" value="GCP"/>
</dbReference>
<dbReference type="InterPro" id="IPR040457">
    <property type="entry name" value="GCP_C"/>
</dbReference>
<dbReference type="InterPro" id="IPR042241">
    <property type="entry name" value="GCP_C_sf"/>
</dbReference>
<dbReference type="InterPro" id="IPR041470">
    <property type="entry name" value="GCP_N"/>
</dbReference>
<dbReference type="PANTHER" id="PTHR19302">
    <property type="entry name" value="GAMMA TUBULIN COMPLEX PROTEIN"/>
    <property type="match status" value="1"/>
</dbReference>
<dbReference type="PANTHER" id="PTHR19302:SF27">
    <property type="entry name" value="GAMMA-TUBULIN COMPLEX COMPONENT 4"/>
    <property type="match status" value="1"/>
</dbReference>
<dbReference type="Pfam" id="PF04130">
    <property type="entry name" value="GCP_C_terminal"/>
    <property type="match status" value="1"/>
</dbReference>
<dbReference type="Pfam" id="PF17681">
    <property type="entry name" value="GCP_N_terminal"/>
    <property type="match status" value="1"/>
</dbReference>
<accession>Q9SC88</accession>
<organism>
    <name type="scientific">Medicago truncatula</name>
    <name type="common">Barrel medic</name>
    <name type="synonym">Medicago tribuloides</name>
    <dbReference type="NCBI Taxonomy" id="3880"/>
    <lineage>
        <taxon>Eukaryota</taxon>
        <taxon>Viridiplantae</taxon>
        <taxon>Streptophyta</taxon>
        <taxon>Embryophyta</taxon>
        <taxon>Tracheophyta</taxon>
        <taxon>Spermatophyta</taxon>
        <taxon>Magnoliopsida</taxon>
        <taxon>eudicotyledons</taxon>
        <taxon>Gunneridae</taxon>
        <taxon>Pentapetalae</taxon>
        <taxon>rosids</taxon>
        <taxon>fabids</taxon>
        <taxon>Fabales</taxon>
        <taxon>Fabaceae</taxon>
        <taxon>Papilionoideae</taxon>
        <taxon>50 kb inversion clade</taxon>
        <taxon>NPAAA clade</taxon>
        <taxon>Hologalegina</taxon>
        <taxon>IRL clade</taxon>
        <taxon>Trifolieae</taxon>
        <taxon>Medicago</taxon>
    </lineage>
</organism>